<organism>
    <name type="scientific">Homo sapiens</name>
    <name type="common">Human</name>
    <dbReference type="NCBI Taxonomy" id="9606"/>
    <lineage>
        <taxon>Eukaryota</taxon>
        <taxon>Metazoa</taxon>
        <taxon>Chordata</taxon>
        <taxon>Craniata</taxon>
        <taxon>Vertebrata</taxon>
        <taxon>Euteleostomi</taxon>
        <taxon>Mammalia</taxon>
        <taxon>Eutheria</taxon>
        <taxon>Euarchontoglires</taxon>
        <taxon>Primates</taxon>
        <taxon>Haplorrhini</taxon>
        <taxon>Catarrhini</taxon>
        <taxon>Hominidae</taxon>
        <taxon>Homo</taxon>
    </lineage>
</organism>
<comment type="function">
    <text evidence="6 8 9">Substrate-binding subunit of tRNA (adenine-N(1)-)-methyltransferase, which catalyzes the formation of N(1)-methyladenine at position 58 (m1A58) in initiator methionyl-tRNA (PubMed:16043508). Together with the TRMT61A catalytic subunit, part of a mRNA N(1)-methyltransferase complex that mediates methylation of adenosine residues at the N(1) position of a small subset of mRNAs: N(1) methylation takes place in tRNA T-loop-like structures of mRNAs and is only present at low stoichiometries (PubMed:29072297, PubMed:29107537).</text>
</comment>
<comment type="subunit">
    <text evidence="7 15">Heterotetramer; composed of two copies of TRMT6 and two copies of TRMT61A.</text>
</comment>
<comment type="interaction">
    <interactant intactId="EBI-934061">
        <id>Q9UJA5</id>
    </interactant>
    <interactant intactId="EBI-399080">
        <id>Q92993</id>
        <label>KAT5</label>
    </interactant>
    <organismsDiffer>false</organismsDiffer>
    <experiments>3</experiments>
</comment>
<comment type="interaction">
    <interactant intactId="EBI-934061">
        <id>Q9UJA5</id>
    </interactant>
    <interactant intactId="EBI-11742507">
        <id>Q8TAP4-4</id>
        <label>LMO3</label>
    </interactant>
    <organismsDiffer>false</organismsDiffer>
    <experiments>3</experiments>
</comment>
<comment type="interaction">
    <interactant intactId="EBI-934061">
        <id>Q9UJA5</id>
    </interactant>
    <interactant intactId="EBI-25884072">
        <id>P62937-2</id>
        <label>PPIA</label>
    </interactant>
    <organismsDiffer>false</organismsDiffer>
    <experiments>3</experiments>
</comment>
<comment type="interaction">
    <interactant intactId="EBI-934061">
        <id>Q9UJA5</id>
    </interactant>
    <interactant intactId="EBI-9090795">
        <id>Q15047-2</id>
        <label>SETDB1</label>
    </interactant>
    <organismsDiffer>false</organismsDiffer>
    <experiments>3</experiments>
</comment>
<comment type="interaction">
    <interactant intactId="EBI-934061">
        <id>Q9UJA5</id>
    </interactant>
    <interactant intactId="EBI-934042">
        <id>Q96FX7</id>
        <label>TRMT61A</label>
    </interactant>
    <organismsDiffer>false</organismsDiffer>
    <experiments>4</experiments>
</comment>
<comment type="interaction">
    <interactant intactId="EBI-934061">
        <id>Q9UJA5</id>
    </interactant>
    <interactant intactId="EBI-359832">
        <id>P61981</id>
        <label>YWHAG</label>
    </interactant>
    <organismsDiffer>false</organismsDiffer>
    <experiments>3</experiments>
</comment>
<comment type="subcellular location">
    <subcellularLocation>
        <location evidence="1">Nucleus</location>
    </subcellularLocation>
</comment>
<comment type="alternative products">
    <event type="alternative splicing"/>
    <isoform>
        <id>Q9UJA5-1</id>
        <name>1</name>
        <sequence type="displayed"/>
    </isoform>
    <isoform>
        <id>Q9UJA5-2</id>
        <name>2</name>
        <sequence type="described" ref="VSP_018025"/>
    </isoform>
    <isoform>
        <id>Q9UJA5-3</id>
        <name>3</name>
        <sequence type="described" ref="VSP_031100 VSP_031101"/>
    </isoform>
    <isoform>
        <id>Q9UJA5-4</id>
        <name>4</name>
        <sequence type="described" ref="VSP_054740"/>
    </isoform>
</comment>
<comment type="tissue specificity">
    <text evidence="3">Expressed in brain, liver, testis and ovary.</text>
</comment>
<comment type="similarity">
    <text evidence="14">Belongs to the TRM6/GCD10 family.</text>
</comment>
<comment type="sequence caution" evidence="14">
    <conflict type="erroneous initiation">
        <sequence resource="EMBL-CDS" id="BAA86467"/>
    </conflict>
    <text>Extended N-terminus.</text>
</comment>
<comment type="sequence caution" evidence="14">
    <conflict type="frameshift">
        <sequence resource="EMBL-CDS" id="BAA86467"/>
    </conflict>
</comment>
<gene>
    <name type="primary">TRMT6</name>
    <name type="synonym">KIAA1153</name>
    <name type="synonym">TRM6</name>
    <name type="ORF">CGI-09</name>
</gene>
<name>TRM6_HUMAN</name>
<feature type="chain" id="PRO_0000233098" description="tRNA (adenine(58)-N(1))-methyltransferase non-catalytic subunit TRM6">
    <location>
        <begin position="1"/>
        <end position="497"/>
    </location>
</feature>
<feature type="region of interest" description="Disordered" evidence="2">
    <location>
        <begin position="1"/>
        <end position="20"/>
    </location>
</feature>
<feature type="region of interest" description="Disordered" evidence="2">
    <location>
        <begin position="69"/>
        <end position="100"/>
    </location>
</feature>
<feature type="region of interest" description="Disordered" evidence="2">
    <location>
        <begin position="276"/>
        <end position="354"/>
    </location>
</feature>
<feature type="region of interest" description="Disordered" evidence="2">
    <location>
        <begin position="472"/>
        <end position="497"/>
    </location>
</feature>
<feature type="compositionally biased region" description="Basic and acidic residues" evidence="2">
    <location>
        <begin position="79"/>
        <end position="100"/>
    </location>
</feature>
<feature type="compositionally biased region" description="Basic and acidic residues" evidence="2">
    <location>
        <begin position="327"/>
        <end position="354"/>
    </location>
</feature>
<feature type="compositionally biased region" description="Basic and acidic residues" evidence="2">
    <location>
        <begin position="478"/>
        <end position="497"/>
    </location>
</feature>
<feature type="binding site" evidence="7 16">
    <location>
        <begin position="94"/>
        <end position="104"/>
    </location>
    <ligand>
        <name>substrate</name>
    </ligand>
</feature>
<feature type="binding site" evidence="7 16">
    <location>
        <begin position="145"/>
        <end position="154"/>
    </location>
    <ligand>
        <name>substrate</name>
    </ligand>
</feature>
<feature type="binding site" evidence="7 16">
    <location>
        <begin position="175"/>
        <end position="182"/>
    </location>
    <ligand>
        <name>substrate</name>
    </ligand>
</feature>
<feature type="binding site" evidence="7 16">
    <location>
        <position position="349"/>
    </location>
    <ligand>
        <name>substrate</name>
    </ligand>
</feature>
<feature type="binding site" evidence="7 16">
    <location>
        <position position="377"/>
    </location>
    <ligand>
        <name>substrate</name>
    </ligand>
</feature>
<feature type="binding site" evidence="7 16">
    <location>
        <begin position="415"/>
        <end position="423"/>
    </location>
    <ligand>
        <name>substrate</name>
    </ligand>
</feature>
<feature type="binding site" evidence="7 16">
    <location>
        <begin position="434"/>
        <end position="441"/>
    </location>
    <ligand>
        <name>substrate</name>
    </ligand>
</feature>
<feature type="modified residue" description="Phosphothreonine" evidence="17">
    <location>
        <position position="107"/>
    </location>
</feature>
<feature type="modified residue" description="Phosphoserine" evidence="18">
    <location>
        <position position="298"/>
    </location>
</feature>
<feature type="modified residue" description="Phosphoserine" evidence="18">
    <location>
        <position position="305"/>
    </location>
</feature>
<feature type="splice variant" id="VSP_054740" description="In isoform 4." evidence="12">
    <location>
        <begin position="1"/>
        <end position="170"/>
    </location>
</feature>
<feature type="splice variant" id="VSP_031100" description="In isoform 3." evidence="11">
    <original>QEKQRRQEEQRKRHLEAAALLS</original>
    <variation>SGKNRGRQGRSSGKDFWGCRFA</variation>
    <location>
        <begin position="344"/>
        <end position="365"/>
    </location>
</feature>
<feature type="splice variant" id="VSP_031101" description="In isoform 3." evidence="11">
    <location>
        <begin position="366"/>
        <end position="497"/>
    </location>
</feature>
<feature type="splice variant" id="VSP_018025" description="In isoform 2." evidence="10">
    <original>LIVASRFHPTPLLLSLLDFVAPSRPFVVYCQYKEPLLECYTKLRERGGVINLRLSETWLRNYQVLPDRSHPKLLMSGGGGYLLSGFTVAMDNLKADTSLKSNASTLESHETEEPAAKKRKCPESDS</original>
    <variation>CVDGRRQETPQCMWALLQTDWHSLSPCL</variation>
    <location>
        <begin position="372"/>
        <end position="497"/>
    </location>
</feature>
<feature type="sequence variant" id="VAR_053789" description="In dbSNP:rs6139876.">
    <original>E</original>
    <variation>K</variation>
    <location>
        <position position="293"/>
    </location>
</feature>
<feature type="sequence variant" id="VAR_053790" description="In dbSNP:rs451571." evidence="4 5">
    <original>E</original>
    <variation>G</variation>
    <location>
        <position position="299"/>
    </location>
</feature>
<feature type="sequence variant" id="VAR_053791" description="In dbSNP:rs35203742.">
    <original>P</original>
    <variation>L</variation>
    <location>
        <position position="333"/>
    </location>
</feature>
<feature type="strand" evidence="19">
    <location>
        <begin position="25"/>
        <end position="30"/>
    </location>
</feature>
<feature type="strand" evidence="19">
    <location>
        <begin position="33"/>
        <end position="38"/>
    </location>
</feature>
<feature type="strand" evidence="19">
    <location>
        <begin position="44"/>
        <end position="46"/>
    </location>
</feature>
<feature type="strand" evidence="19">
    <location>
        <begin position="51"/>
        <end position="53"/>
    </location>
</feature>
<feature type="helix" evidence="19">
    <location>
        <begin position="54"/>
        <end position="56"/>
    </location>
</feature>
<feature type="strand" evidence="19">
    <location>
        <begin position="59"/>
        <end position="61"/>
    </location>
</feature>
<feature type="strand" evidence="20">
    <location>
        <begin position="64"/>
        <end position="74"/>
    </location>
</feature>
<feature type="helix" evidence="19">
    <location>
        <begin position="108"/>
        <end position="116"/>
    </location>
</feature>
<feature type="helix" evidence="19">
    <location>
        <begin position="122"/>
        <end position="130"/>
    </location>
</feature>
<feature type="strand" evidence="19">
    <location>
        <begin position="132"/>
        <end position="134"/>
    </location>
</feature>
<feature type="helix" evidence="19">
    <location>
        <begin position="135"/>
        <end position="137"/>
    </location>
</feature>
<feature type="helix" evidence="19">
    <location>
        <begin position="140"/>
        <end position="154"/>
    </location>
</feature>
<feature type="strand" evidence="19">
    <location>
        <begin position="159"/>
        <end position="161"/>
    </location>
</feature>
<feature type="helix" evidence="19">
    <location>
        <begin position="165"/>
        <end position="175"/>
    </location>
</feature>
<feature type="helix" evidence="19">
    <location>
        <begin position="177"/>
        <end position="180"/>
    </location>
</feature>
<feature type="helix" evidence="19">
    <location>
        <begin position="185"/>
        <end position="194"/>
    </location>
</feature>
<feature type="strand" evidence="19">
    <location>
        <begin position="202"/>
        <end position="207"/>
    </location>
</feature>
<feature type="helix" evidence="19">
    <location>
        <begin position="212"/>
        <end position="221"/>
    </location>
</feature>
<feature type="strand" evidence="19">
    <location>
        <begin position="225"/>
        <end position="232"/>
    </location>
</feature>
<feature type="helix" evidence="19">
    <location>
        <begin position="239"/>
        <end position="243"/>
    </location>
</feature>
<feature type="helix" evidence="19">
    <location>
        <begin position="248"/>
        <end position="251"/>
    </location>
</feature>
<feature type="strand" evidence="19">
    <location>
        <begin position="254"/>
        <end position="258"/>
    </location>
</feature>
<feature type="helix" evidence="19">
    <location>
        <begin position="259"/>
        <end position="261"/>
    </location>
</feature>
<feature type="helix" evidence="19">
    <location>
        <begin position="262"/>
        <end position="267"/>
    </location>
</feature>
<feature type="helix" evidence="19">
    <location>
        <begin position="342"/>
        <end position="365"/>
    </location>
</feature>
<feature type="strand" evidence="19">
    <location>
        <begin position="369"/>
        <end position="375"/>
    </location>
</feature>
<feature type="helix" evidence="19">
    <location>
        <begin position="380"/>
        <end position="387"/>
    </location>
</feature>
<feature type="helix" evidence="19">
    <location>
        <begin position="388"/>
        <end position="390"/>
    </location>
</feature>
<feature type="strand" evidence="19">
    <location>
        <begin position="396"/>
        <end position="404"/>
    </location>
</feature>
<feature type="helix" evidence="19">
    <location>
        <begin position="405"/>
        <end position="417"/>
    </location>
</feature>
<feature type="strand" evidence="19">
    <location>
        <begin position="420"/>
        <end position="434"/>
    </location>
</feature>
<feature type="strand" evidence="19">
    <location>
        <begin position="441"/>
        <end position="446"/>
    </location>
</feature>
<feature type="strand" evidence="19">
    <location>
        <begin position="448"/>
        <end position="450"/>
    </location>
</feature>
<feature type="strand" evidence="19">
    <location>
        <begin position="452"/>
        <end position="458"/>
    </location>
</feature>
<sequence>MEGSGEQPGPQPQHPGDHRIRDGDFVVLKREDVFKAVQVQRRKKVTFEKQWFYLDNVIGHSYGTAFEVTSGGSLQPKKKREEPTAETKEAGTDNRNIVDDGKSQKLTQDDIKALKDKGIKGEEIVQQLIENSTTFRDKTEFAQDKYIKKKKKKYEAIITVVKPSTRILSIMYYAREPGKINHMRYDTLAQMLTLGNIRAGNKMIVMETCAGLVLGAMMERMGGFGSIIQLYPGGGPVRAATACFGFPKSFLSGLYEFPLNKVDSLLHGTFSAKMLSSEPKDSALVEESNGTLEEKQASEQENEDSMAEAPESNHPEDQETMETISQDPEHKGPKERGSKKDYIQEKQRRQEEQRKRHLEAAALLSERNADGLIVASRFHPTPLLLSLLDFVAPSRPFVVYCQYKEPLLECYTKLRERGGVINLRLSETWLRNYQVLPDRSHPKLLMSGGGGYLLSGFTVAMDNLKADTSLKSNASTLESHETEEPAAKKRKCPESDS</sequence>
<evidence type="ECO:0000250" key="1">
    <source>
        <dbReference type="UniProtKB" id="P41814"/>
    </source>
</evidence>
<evidence type="ECO:0000256" key="2">
    <source>
        <dbReference type="SAM" id="MobiDB-lite"/>
    </source>
</evidence>
<evidence type="ECO:0000269" key="3">
    <source>
    </source>
</evidence>
<evidence type="ECO:0000269" key="4">
    <source>
    </source>
</evidence>
<evidence type="ECO:0000269" key="5">
    <source>
    </source>
</evidence>
<evidence type="ECO:0000269" key="6">
    <source>
    </source>
</evidence>
<evidence type="ECO:0000269" key="7">
    <source>
    </source>
</evidence>
<evidence type="ECO:0000269" key="8">
    <source>
    </source>
</evidence>
<evidence type="ECO:0000269" key="9">
    <source>
    </source>
</evidence>
<evidence type="ECO:0000303" key="10">
    <source>
    </source>
</evidence>
<evidence type="ECO:0000303" key="11">
    <source>
    </source>
</evidence>
<evidence type="ECO:0000303" key="12">
    <source>
    </source>
</evidence>
<evidence type="ECO:0000303" key="13">
    <source>
    </source>
</evidence>
<evidence type="ECO:0000305" key="14"/>
<evidence type="ECO:0000305" key="15">
    <source>
    </source>
</evidence>
<evidence type="ECO:0007744" key="16">
    <source>
        <dbReference type="PDB" id="5CD1"/>
    </source>
</evidence>
<evidence type="ECO:0007744" key="17">
    <source>
    </source>
</evidence>
<evidence type="ECO:0007744" key="18">
    <source>
    </source>
</evidence>
<evidence type="ECO:0007829" key="19">
    <source>
        <dbReference type="PDB" id="5CCB"/>
    </source>
</evidence>
<evidence type="ECO:0007829" key="20">
    <source>
        <dbReference type="PDB" id="5CCX"/>
    </source>
</evidence>
<keyword id="KW-0002">3D-structure</keyword>
<keyword id="KW-0025">Alternative splicing</keyword>
<keyword id="KW-0539">Nucleus</keyword>
<keyword id="KW-0597">Phosphoprotein</keyword>
<keyword id="KW-1267">Proteomics identification</keyword>
<keyword id="KW-1185">Reference proteome</keyword>
<keyword id="KW-0819">tRNA processing</keyword>
<dbReference type="EMBL" id="AB032979">
    <property type="protein sequence ID" value="BAA86467.1"/>
    <property type="status" value="ALT_INIT"/>
    <property type="molecule type" value="mRNA"/>
</dbReference>
<dbReference type="EMBL" id="AF132943">
    <property type="protein sequence ID" value="AAD27718.1"/>
    <property type="status" value="ALT_FRAME"/>
    <property type="molecule type" value="mRNA"/>
</dbReference>
<dbReference type="EMBL" id="AK000613">
    <property type="status" value="NOT_ANNOTATED_CDS"/>
    <property type="molecule type" value="mRNA"/>
</dbReference>
<dbReference type="EMBL" id="AK300812">
    <property type="protein sequence ID" value="BAG62468.1"/>
    <property type="molecule type" value="mRNA"/>
</dbReference>
<dbReference type="EMBL" id="AL035461">
    <property type="status" value="NOT_ANNOTATED_CDS"/>
    <property type="molecule type" value="Genomic_DNA"/>
</dbReference>
<dbReference type="EMBL" id="BC001262">
    <property type="protein sequence ID" value="AAH01262.1"/>
    <property type="molecule type" value="mRNA"/>
</dbReference>
<dbReference type="CCDS" id="CCDS13093.1">
    <molecule id="Q9UJA5-1"/>
</dbReference>
<dbReference type="CCDS" id="CCDS63225.1">
    <molecule id="Q9UJA5-4"/>
</dbReference>
<dbReference type="RefSeq" id="NP_001268396.1">
    <molecule id="Q9UJA5-4"/>
    <property type="nucleotide sequence ID" value="NM_001281467.2"/>
</dbReference>
<dbReference type="RefSeq" id="NP_057023.2">
    <molecule id="Q9UJA5-1"/>
    <property type="nucleotide sequence ID" value="NM_015939.4"/>
</dbReference>
<dbReference type="PDB" id="5CCB">
    <property type="method" value="X-ray"/>
    <property type="resolution" value="2.00 A"/>
    <property type="chains" value="B=1-497"/>
</dbReference>
<dbReference type="PDB" id="5CCX">
    <property type="method" value="X-ray"/>
    <property type="resolution" value="2.10 A"/>
    <property type="chains" value="B=1-497"/>
</dbReference>
<dbReference type="PDB" id="5CD1">
    <property type="method" value="X-ray"/>
    <property type="resolution" value="3.60 A"/>
    <property type="chains" value="B/E=1-497"/>
</dbReference>
<dbReference type="PDBsum" id="5CCB"/>
<dbReference type="PDBsum" id="5CCX"/>
<dbReference type="PDBsum" id="5CD1"/>
<dbReference type="SMR" id="Q9UJA5"/>
<dbReference type="BioGRID" id="119634">
    <property type="interactions" value="107"/>
</dbReference>
<dbReference type="ComplexPortal" id="CPX-6269">
    <property type="entry name" value="tRNA (adenine(58)-N(1))-methyltransferase complex"/>
</dbReference>
<dbReference type="FunCoup" id="Q9UJA5">
    <property type="interactions" value="2901"/>
</dbReference>
<dbReference type="IntAct" id="Q9UJA5">
    <property type="interactions" value="42"/>
</dbReference>
<dbReference type="MINT" id="Q9UJA5"/>
<dbReference type="STRING" id="9606.ENSP00000203001"/>
<dbReference type="GlyGen" id="Q9UJA5">
    <property type="glycosylation" value="1 site, 1 O-linked glycan (1 site)"/>
</dbReference>
<dbReference type="iPTMnet" id="Q9UJA5"/>
<dbReference type="PhosphoSitePlus" id="Q9UJA5"/>
<dbReference type="SwissPalm" id="Q9UJA5"/>
<dbReference type="BioMuta" id="TRMT6"/>
<dbReference type="DMDM" id="74753354"/>
<dbReference type="jPOST" id="Q9UJA5"/>
<dbReference type="MassIVE" id="Q9UJA5"/>
<dbReference type="PaxDb" id="9606-ENSP00000203001"/>
<dbReference type="PeptideAtlas" id="Q9UJA5"/>
<dbReference type="ProteomicsDB" id="5222"/>
<dbReference type="ProteomicsDB" id="84613">
    <molecule id="Q9UJA5-1"/>
</dbReference>
<dbReference type="ProteomicsDB" id="84614">
    <molecule id="Q9UJA5-2"/>
</dbReference>
<dbReference type="ProteomicsDB" id="84615">
    <molecule id="Q9UJA5-3"/>
</dbReference>
<dbReference type="Pumba" id="Q9UJA5"/>
<dbReference type="Antibodypedia" id="23943">
    <property type="antibodies" value="86 antibodies from 20 providers"/>
</dbReference>
<dbReference type="DNASU" id="51605"/>
<dbReference type="Ensembl" id="ENST00000203001.7">
    <molecule id="Q9UJA5-1"/>
    <property type="protein sequence ID" value="ENSP00000203001.2"/>
    <property type="gene ID" value="ENSG00000089195.15"/>
</dbReference>
<dbReference type="Ensembl" id="ENST00000453074.6">
    <molecule id="Q9UJA5-4"/>
    <property type="protein sequence ID" value="ENSP00000392070.2"/>
    <property type="gene ID" value="ENSG00000089195.15"/>
</dbReference>
<dbReference type="GeneID" id="51605"/>
<dbReference type="KEGG" id="hsa:51605"/>
<dbReference type="MANE-Select" id="ENST00000203001.7">
    <property type="protein sequence ID" value="ENSP00000203001.2"/>
    <property type="RefSeq nucleotide sequence ID" value="NM_015939.5"/>
    <property type="RefSeq protein sequence ID" value="NP_057023.2"/>
</dbReference>
<dbReference type="UCSC" id="uc002wmh.3">
    <molecule id="Q9UJA5-1"/>
    <property type="organism name" value="human"/>
</dbReference>
<dbReference type="AGR" id="HGNC:20900"/>
<dbReference type="CTD" id="51605"/>
<dbReference type="DisGeNET" id="51605"/>
<dbReference type="GeneCards" id="TRMT6"/>
<dbReference type="HGNC" id="HGNC:20900">
    <property type="gene designation" value="TRMT6"/>
</dbReference>
<dbReference type="HPA" id="ENSG00000089195">
    <property type="expression patterns" value="Low tissue specificity"/>
</dbReference>
<dbReference type="MIM" id="620886">
    <property type="type" value="gene"/>
</dbReference>
<dbReference type="neXtProt" id="NX_Q9UJA5"/>
<dbReference type="OpenTargets" id="ENSG00000089195"/>
<dbReference type="PharmGKB" id="PA162407063"/>
<dbReference type="VEuPathDB" id="HostDB:ENSG00000089195"/>
<dbReference type="eggNOG" id="KOG1416">
    <property type="taxonomic scope" value="Eukaryota"/>
</dbReference>
<dbReference type="GeneTree" id="ENSGT00390000008327"/>
<dbReference type="HOGENOM" id="CLU_010916_0_1_1"/>
<dbReference type="InParanoid" id="Q9UJA5"/>
<dbReference type="OMA" id="TRCRPYQ"/>
<dbReference type="OrthoDB" id="10254665at2759"/>
<dbReference type="PAN-GO" id="Q9UJA5">
    <property type="GO annotations" value="2 GO annotations based on evolutionary models"/>
</dbReference>
<dbReference type="PhylomeDB" id="Q9UJA5"/>
<dbReference type="TreeFam" id="TF314835"/>
<dbReference type="BRENDA" id="2.1.1.220">
    <property type="organism ID" value="2681"/>
</dbReference>
<dbReference type="PathwayCommons" id="Q9UJA5"/>
<dbReference type="Reactome" id="R-HSA-6782315">
    <property type="pathway name" value="tRNA modification in the nucleus and cytosol"/>
</dbReference>
<dbReference type="SignaLink" id="Q9UJA5"/>
<dbReference type="BioGRID-ORCS" id="51605">
    <property type="hits" value="323 hits in 1135 CRISPR screens"/>
</dbReference>
<dbReference type="CD-CODE" id="91857CE7">
    <property type="entry name" value="Nucleolus"/>
</dbReference>
<dbReference type="ChiTaRS" id="TRMT6">
    <property type="organism name" value="human"/>
</dbReference>
<dbReference type="EvolutionaryTrace" id="Q9UJA5"/>
<dbReference type="GenomeRNAi" id="51605"/>
<dbReference type="Pharos" id="Q9UJA5">
    <property type="development level" value="Tbio"/>
</dbReference>
<dbReference type="PRO" id="PR:Q9UJA5"/>
<dbReference type="Proteomes" id="UP000005640">
    <property type="component" value="Chromosome 20"/>
</dbReference>
<dbReference type="RNAct" id="Q9UJA5">
    <property type="molecule type" value="protein"/>
</dbReference>
<dbReference type="Bgee" id="ENSG00000089195">
    <property type="expression patterns" value="Expressed in secondary oocyte and 189 other cell types or tissues"/>
</dbReference>
<dbReference type="GO" id="GO:0005654">
    <property type="term" value="C:nucleoplasm"/>
    <property type="evidence" value="ECO:0000304"/>
    <property type="project" value="Reactome"/>
</dbReference>
<dbReference type="GO" id="GO:0005634">
    <property type="term" value="C:nucleus"/>
    <property type="evidence" value="ECO:0000318"/>
    <property type="project" value="GO_Central"/>
</dbReference>
<dbReference type="GO" id="GO:0031515">
    <property type="term" value="C:tRNA (m1A) methyltransferase complex"/>
    <property type="evidence" value="ECO:0000353"/>
    <property type="project" value="ComplexPortal"/>
</dbReference>
<dbReference type="GO" id="GO:0003723">
    <property type="term" value="F:RNA binding"/>
    <property type="evidence" value="ECO:0007005"/>
    <property type="project" value="UniProtKB"/>
</dbReference>
<dbReference type="GO" id="GO:0006397">
    <property type="term" value="P:mRNA processing"/>
    <property type="evidence" value="ECO:0000314"/>
    <property type="project" value="UniProtKB"/>
</dbReference>
<dbReference type="GO" id="GO:0030488">
    <property type="term" value="P:tRNA methylation"/>
    <property type="evidence" value="ECO:0007669"/>
    <property type="project" value="InterPro"/>
</dbReference>
<dbReference type="InterPro" id="IPR017423">
    <property type="entry name" value="TRM6"/>
</dbReference>
<dbReference type="PANTHER" id="PTHR12945">
    <property type="entry name" value="TRANSLATION INITIATION FACTOR EIF3-RELATED"/>
    <property type="match status" value="1"/>
</dbReference>
<dbReference type="PANTHER" id="PTHR12945:SF0">
    <property type="entry name" value="TRNA (ADENINE(58)-N(1))-METHYLTRANSFERASE NON-CATALYTIC SUBUNIT TRM6"/>
    <property type="match status" value="1"/>
</dbReference>
<dbReference type="Pfam" id="PF04189">
    <property type="entry name" value="Gcd10p"/>
    <property type="match status" value="1"/>
</dbReference>
<dbReference type="PIRSF" id="PIRSF038170">
    <property type="entry name" value="tRNA_m1A_mtfrase"/>
    <property type="match status" value="1"/>
</dbReference>
<reference key="1">
    <citation type="journal article" date="1999" name="DNA Res.">
        <title>Characterization of cDNA clones selected by the GeneMark analysis from size-fractionated cDNA libraries from human brain.</title>
        <authorList>
            <person name="Hirosawa M."/>
            <person name="Nagase T."/>
            <person name="Ishikawa K."/>
            <person name="Kikuno R."/>
            <person name="Nomura N."/>
            <person name="Ohara O."/>
        </authorList>
    </citation>
    <scope>NUCLEOTIDE SEQUENCE [LARGE SCALE MRNA] (ISOFORM 2)</scope>
    <scope>TISSUE SPECIFICITY</scope>
    <source>
        <tissue>Brain</tissue>
    </source>
</reference>
<reference key="2">
    <citation type="journal article" date="2000" name="Genome Res.">
        <title>Identification of novel human genes evolutionarily conserved in Caenorhabditis elegans by comparative proteomics.</title>
        <authorList>
            <person name="Lai C.-H."/>
            <person name="Chou C.-Y."/>
            <person name="Ch'ang L.-Y."/>
            <person name="Liu C.-S."/>
            <person name="Lin W.-C."/>
        </authorList>
    </citation>
    <scope>NUCLEOTIDE SEQUENCE [LARGE SCALE MRNA] (ISOFORM 3)</scope>
    <scope>VARIANT GLY-299</scope>
</reference>
<reference key="3">
    <citation type="journal article" date="2004" name="Nat. Genet.">
        <title>Complete sequencing and characterization of 21,243 full-length human cDNAs.</title>
        <authorList>
            <person name="Ota T."/>
            <person name="Suzuki Y."/>
            <person name="Nishikawa T."/>
            <person name="Otsuki T."/>
            <person name="Sugiyama T."/>
            <person name="Irie R."/>
            <person name="Wakamatsu A."/>
            <person name="Hayashi K."/>
            <person name="Sato H."/>
            <person name="Nagai K."/>
            <person name="Kimura K."/>
            <person name="Makita H."/>
            <person name="Sekine M."/>
            <person name="Obayashi M."/>
            <person name="Nishi T."/>
            <person name="Shibahara T."/>
            <person name="Tanaka T."/>
            <person name="Ishii S."/>
            <person name="Yamamoto J."/>
            <person name="Saito K."/>
            <person name="Kawai Y."/>
            <person name="Isono Y."/>
            <person name="Nakamura Y."/>
            <person name="Nagahari K."/>
            <person name="Murakami K."/>
            <person name="Yasuda T."/>
            <person name="Iwayanagi T."/>
            <person name="Wagatsuma M."/>
            <person name="Shiratori A."/>
            <person name="Sudo H."/>
            <person name="Hosoiri T."/>
            <person name="Kaku Y."/>
            <person name="Kodaira H."/>
            <person name="Kondo H."/>
            <person name="Sugawara M."/>
            <person name="Takahashi M."/>
            <person name="Kanda K."/>
            <person name="Yokoi T."/>
            <person name="Furuya T."/>
            <person name="Kikkawa E."/>
            <person name="Omura Y."/>
            <person name="Abe K."/>
            <person name="Kamihara K."/>
            <person name="Katsuta N."/>
            <person name="Sato K."/>
            <person name="Tanikawa M."/>
            <person name="Yamazaki M."/>
            <person name="Ninomiya K."/>
            <person name="Ishibashi T."/>
            <person name="Yamashita H."/>
            <person name="Murakawa K."/>
            <person name="Fujimori K."/>
            <person name="Tanai H."/>
            <person name="Kimata M."/>
            <person name="Watanabe M."/>
            <person name="Hiraoka S."/>
            <person name="Chiba Y."/>
            <person name="Ishida S."/>
            <person name="Ono Y."/>
            <person name="Takiguchi S."/>
            <person name="Watanabe S."/>
            <person name="Yosida M."/>
            <person name="Hotuta T."/>
            <person name="Kusano J."/>
            <person name="Kanehori K."/>
            <person name="Takahashi-Fujii A."/>
            <person name="Hara H."/>
            <person name="Tanase T.-O."/>
            <person name="Nomura Y."/>
            <person name="Togiya S."/>
            <person name="Komai F."/>
            <person name="Hara R."/>
            <person name="Takeuchi K."/>
            <person name="Arita M."/>
            <person name="Imose N."/>
            <person name="Musashino K."/>
            <person name="Yuuki H."/>
            <person name="Oshima A."/>
            <person name="Sasaki N."/>
            <person name="Aotsuka S."/>
            <person name="Yoshikawa Y."/>
            <person name="Matsunawa H."/>
            <person name="Ichihara T."/>
            <person name="Shiohata N."/>
            <person name="Sano S."/>
            <person name="Moriya S."/>
            <person name="Momiyama H."/>
            <person name="Satoh N."/>
            <person name="Takami S."/>
            <person name="Terashima Y."/>
            <person name="Suzuki O."/>
            <person name="Nakagawa S."/>
            <person name="Senoh A."/>
            <person name="Mizoguchi H."/>
            <person name="Goto Y."/>
            <person name="Shimizu F."/>
            <person name="Wakebe H."/>
            <person name="Hishigaki H."/>
            <person name="Watanabe T."/>
            <person name="Sugiyama A."/>
            <person name="Takemoto M."/>
            <person name="Kawakami B."/>
            <person name="Yamazaki M."/>
            <person name="Watanabe K."/>
            <person name="Kumagai A."/>
            <person name="Itakura S."/>
            <person name="Fukuzumi Y."/>
            <person name="Fujimori Y."/>
            <person name="Komiyama M."/>
            <person name="Tashiro H."/>
            <person name="Tanigami A."/>
            <person name="Fujiwara T."/>
            <person name="Ono T."/>
            <person name="Yamada K."/>
            <person name="Fujii Y."/>
            <person name="Ozaki K."/>
            <person name="Hirao M."/>
            <person name="Ohmori Y."/>
            <person name="Kawabata A."/>
            <person name="Hikiji T."/>
            <person name="Kobatake N."/>
            <person name="Inagaki H."/>
            <person name="Ikema Y."/>
            <person name="Okamoto S."/>
            <person name="Okitani R."/>
            <person name="Kawakami T."/>
            <person name="Noguchi S."/>
            <person name="Itoh T."/>
            <person name="Shigeta K."/>
            <person name="Senba T."/>
            <person name="Matsumura K."/>
            <person name="Nakajima Y."/>
            <person name="Mizuno T."/>
            <person name="Morinaga M."/>
            <person name="Sasaki M."/>
            <person name="Togashi T."/>
            <person name="Oyama M."/>
            <person name="Hata H."/>
            <person name="Watanabe M."/>
            <person name="Komatsu T."/>
            <person name="Mizushima-Sugano J."/>
            <person name="Satoh T."/>
            <person name="Shirai Y."/>
            <person name="Takahashi Y."/>
            <person name="Nakagawa K."/>
            <person name="Okumura K."/>
            <person name="Nagase T."/>
            <person name="Nomura N."/>
            <person name="Kikuchi H."/>
            <person name="Masuho Y."/>
            <person name="Yamashita R."/>
            <person name="Nakai K."/>
            <person name="Yada T."/>
            <person name="Nakamura Y."/>
            <person name="Ohara O."/>
            <person name="Isogai T."/>
            <person name="Sugano S."/>
        </authorList>
    </citation>
    <scope>NUCLEOTIDE SEQUENCE [LARGE SCALE MRNA] (ISOFORMS 1 AND 4)</scope>
    <scope>VARIANT GLY-299</scope>
</reference>
<reference key="4">
    <citation type="journal article" date="2001" name="Nature">
        <title>The DNA sequence and comparative analysis of human chromosome 20.</title>
        <authorList>
            <person name="Deloukas P."/>
            <person name="Matthews L.H."/>
            <person name="Ashurst J.L."/>
            <person name="Burton J."/>
            <person name="Gilbert J.G.R."/>
            <person name="Jones M."/>
            <person name="Stavrides G."/>
            <person name="Almeida J.P."/>
            <person name="Babbage A.K."/>
            <person name="Bagguley C.L."/>
            <person name="Bailey J."/>
            <person name="Barlow K.F."/>
            <person name="Bates K.N."/>
            <person name="Beard L.M."/>
            <person name="Beare D.M."/>
            <person name="Beasley O.P."/>
            <person name="Bird C.P."/>
            <person name="Blakey S.E."/>
            <person name="Bridgeman A.M."/>
            <person name="Brown A.J."/>
            <person name="Buck D."/>
            <person name="Burrill W.D."/>
            <person name="Butler A.P."/>
            <person name="Carder C."/>
            <person name="Carter N.P."/>
            <person name="Chapman J.C."/>
            <person name="Clamp M."/>
            <person name="Clark G."/>
            <person name="Clark L.N."/>
            <person name="Clark S.Y."/>
            <person name="Clee C.M."/>
            <person name="Clegg S."/>
            <person name="Cobley V.E."/>
            <person name="Collier R.E."/>
            <person name="Connor R.E."/>
            <person name="Corby N.R."/>
            <person name="Coulson A."/>
            <person name="Coville G.J."/>
            <person name="Deadman R."/>
            <person name="Dhami P.D."/>
            <person name="Dunn M."/>
            <person name="Ellington A.G."/>
            <person name="Frankland J.A."/>
            <person name="Fraser A."/>
            <person name="French L."/>
            <person name="Garner P."/>
            <person name="Grafham D.V."/>
            <person name="Griffiths C."/>
            <person name="Griffiths M.N.D."/>
            <person name="Gwilliam R."/>
            <person name="Hall R.E."/>
            <person name="Hammond S."/>
            <person name="Harley J.L."/>
            <person name="Heath P.D."/>
            <person name="Ho S."/>
            <person name="Holden J.L."/>
            <person name="Howden P.J."/>
            <person name="Huckle E."/>
            <person name="Hunt A.R."/>
            <person name="Hunt S.E."/>
            <person name="Jekosch K."/>
            <person name="Johnson C.M."/>
            <person name="Johnson D."/>
            <person name="Kay M.P."/>
            <person name="Kimberley A.M."/>
            <person name="King A."/>
            <person name="Knights A."/>
            <person name="Laird G.K."/>
            <person name="Lawlor S."/>
            <person name="Lehvaeslaiho M.H."/>
            <person name="Leversha M.A."/>
            <person name="Lloyd C."/>
            <person name="Lloyd D.M."/>
            <person name="Lovell J.D."/>
            <person name="Marsh V.L."/>
            <person name="Martin S.L."/>
            <person name="McConnachie L.J."/>
            <person name="McLay K."/>
            <person name="McMurray A.A."/>
            <person name="Milne S.A."/>
            <person name="Mistry D."/>
            <person name="Moore M.J.F."/>
            <person name="Mullikin J.C."/>
            <person name="Nickerson T."/>
            <person name="Oliver K."/>
            <person name="Parker A."/>
            <person name="Patel R."/>
            <person name="Pearce T.A.V."/>
            <person name="Peck A.I."/>
            <person name="Phillimore B.J.C.T."/>
            <person name="Prathalingam S.R."/>
            <person name="Plumb R.W."/>
            <person name="Ramsay H."/>
            <person name="Rice C.M."/>
            <person name="Ross M.T."/>
            <person name="Scott C.E."/>
            <person name="Sehra H.K."/>
            <person name="Shownkeen R."/>
            <person name="Sims S."/>
            <person name="Skuce C.D."/>
            <person name="Smith M.L."/>
            <person name="Soderlund C."/>
            <person name="Steward C.A."/>
            <person name="Sulston J.E."/>
            <person name="Swann R.M."/>
            <person name="Sycamore N."/>
            <person name="Taylor R."/>
            <person name="Tee L."/>
            <person name="Thomas D.W."/>
            <person name="Thorpe A."/>
            <person name="Tracey A."/>
            <person name="Tromans A.C."/>
            <person name="Vaudin M."/>
            <person name="Wall M."/>
            <person name="Wallis J.M."/>
            <person name="Whitehead S.L."/>
            <person name="Whittaker P."/>
            <person name="Willey D.L."/>
            <person name="Williams L."/>
            <person name="Williams S.A."/>
            <person name="Wilming L."/>
            <person name="Wray P.W."/>
            <person name="Hubbard T."/>
            <person name="Durbin R.M."/>
            <person name="Bentley D.R."/>
            <person name="Beck S."/>
            <person name="Rogers J."/>
        </authorList>
    </citation>
    <scope>NUCLEOTIDE SEQUENCE [LARGE SCALE GENOMIC DNA]</scope>
</reference>
<reference key="5">
    <citation type="journal article" date="2004" name="Genome Res.">
        <title>The status, quality, and expansion of the NIH full-length cDNA project: the Mammalian Gene Collection (MGC).</title>
        <authorList>
            <consortium name="The MGC Project Team"/>
        </authorList>
    </citation>
    <scope>NUCLEOTIDE SEQUENCE [LARGE SCALE MRNA] (ISOFORM 1)</scope>
    <source>
        <tissue>Cervix</tissue>
    </source>
</reference>
<reference key="6">
    <citation type="journal article" date="2005" name="RNA">
        <title>The bipartite structure of the tRNA m1A58 methyltransferase from S. cerevisiae is conserved in humans.</title>
        <authorList>
            <person name="Ozanick S."/>
            <person name="Krecic A."/>
            <person name="Andersland J."/>
            <person name="Anderson J.T."/>
        </authorList>
    </citation>
    <scope>FUNCTION</scope>
    <scope>SUBUNIT</scope>
</reference>
<reference key="7">
    <citation type="journal article" date="2007" name="Science">
        <title>ATM and ATR substrate analysis reveals extensive protein networks responsive to DNA damage.</title>
        <authorList>
            <person name="Matsuoka S."/>
            <person name="Ballif B.A."/>
            <person name="Smogorzewska A."/>
            <person name="McDonald E.R. III"/>
            <person name="Hurov K.E."/>
            <person name="Luo J."/>
            <person name="Bakalarski C.E."/>
            <person name="Zhao Z."/>
            <person name="Solimini N."/>
            <person name="Lerenthal Y."/>
            <person name="Shiloh Y."/>
            <person name="Gygi S.P."/>
            <person name="Elledge S.J."/>
        </authorList>
    </citation>
    <scope>PHOSPHORYLATION [LARGE SCALE ANALYSIS] AT THR-107</scope>
    <scope>IDENTIFICATION BY MASS SPECTROMETRY [LARGE SCALE ANALYSIS]</scope>
    <source>
        <tissue>Embryonic kidney</tissue>
    </source>
</reference>
<reference key="8">
    <citation type="journal article" date="2011" name="BMC Syst. Biol.">
        <title>Initial characterization of the human central proteome.</title>
        <authorList>
            <person name="Burkard T.R."/>
            <person name="Planyavsky M."/>
            <person name="Kaupe I."/>
            <person name="Breitwieser F.P."/>
            <person name="Buerckstuemmer T."/>
            <person name="Bennett K.L."/>
            <person name="Superti-Furga G."/>
            <person name="Colinge J."/>
        </authorList>
    </citation>
    <scope>IDENTIFICATION BY MASS SPECTROMETRY [LARGE SCALE ANALYSIS]</scope>
</reference>
<reference key="9">
    <citation type="journal article" date="2013" name="J. Proteome Res.">
        <title>Toward a comprehensive characterization of a human cancer cell phosphoproteome.</title>
        <authorList>
            <person name="Zhou H."/>
            <person name="Di Palma S."/>
            <person name="Preisinger C."/>
            <person name="Peng M."/>
            <person name="Polat A.N."/>
            <person name="Heck A.J."/>
            <person name="Mohammed S."/>
        </authorList>
    </citation>
    <scope>PHOSPHORYLATION [LARGE SCALE ANALYSIS] AT SER-298 AND SER-305</scope>
    <scope>IDENTIFICATION BY MASS SPECTROMETRY [LARGE SCALE ANALYSIS]</scope>
    <source>
        <tissue>Cervix carcinoma</tissue>
        <tissue>Erythroleukemia</tissue>
    </source>
</reference>
<reference key="10">
    <citation type="journal article" date="2017" name="Mol. Cell">
        <title>Base-resolution mapping reveals distinct m1A methylome in nuclear- and mitochondrial-encoded transcripts.</title>
        <authorList>
            <person name="Li X."/>
            <person name="Xiong X."/>
            <person name="Zhang M."/>
            <person name="Wang K."/>
            <person name="Chen Y."/>
            <person name="Zhou J."/>
            <person name="Mao Y."/>
            <person name="Lv J."/>
            <person name="Yi D."/>
            <person name="Chen X.W."/>
            <person name="Wang C."/>
            <person name="Qian S.B."/>
            <person name="Yi C."/>
        </authorList>
    </citation>
    <scope>FUNCTION</scope>
</reference>
<reference key="11">
    <citation type="journal article" date="2017" name="Nature">
        <title>The m(1)A landscape on cytosolic and mitochondrial mRNA at single-base resolution.</title>
        <authorList>
            <person name="Safra M."/>
            <person name="Sas-Chen A."/>
            <person name="Nir R."/>
            <person name="Winkler R."/>
            <person name="Nachshon A."/>
            <person name="Bar-Yaacov D."/>
            <person name="Erlacher M."/>
            <person name="Rossmanith W."/>
            <person name="Stern-Ginossar N."/>
            <person name="Schwartz S."/>
        </authorList>
    </citation>
    <scope>FUNCTION</scope>
</reference>
<reference key="12">
    <citation type="journal article" date="2015" name="J. Mol. Biol.">
        <title>Crystal structure of the human tRNA m(1)A58 methyltransferase-tRNA(3)(Lys) complex: refolding of substrate tRNA allows access to the methylation target.</title>
        <authorList>
            <person name="Finer-Moore J."/>
            <person name="Czudnochowski N."/>
            <person name="O'Connell J.D. III"/>
            <person name="Wang A.L."/>
            <person name="Stroud R.M."/>
        </authorList>
    </citation>
    <scope>X-RAY CRYSTALLOGRAPHY (2.00 ANGSTROMS) IN COMPLEX WITH TRMT61A</scope>
</reference>
<protein>
    <recommendedName>
        <fullName>tRNA (adenine(58)-N(1))-methyltransferase non-catalytic subunit TRM6</fullName>
    </recommendedName>
    <alternativeName>
        <fullName evidence="13">mRNA methyladenosine-N(1)-methyltransferase non-catalytic subunit TRM6</fullName>
    </alternativeName>
    <alternativeName>
        <fullName>tRNA(m1A58)-methyltransferase subunit TRM6</fullName>
        <shortName>tRNA(m1A58)MTase subunit TRM6</shortName>
    </alternativeName>
</protein>
<accession>Q9UJA5</accession>
<accession>B4DUV6</accession>
<accession>Q76P92</accession>
<accession>Q9BQV5</accession>
<accession>Q9ULR7</accession>
<accession>Q9Y2Z8</accession>
<proteinExistence type="evidence at protein level"/>